<reference key="1">
    <citation type="journal article" date="2002" name="J. Bacteriol.">
        <title>Whole-genome comparison of Mycobacterium tuberculosis clinical and laboratory strains.</title>
        <authorList>
            <person name="Fleischmann R.D."/>
            <person name="Alland D."/>
            <person name="Eisen J.A."/>
            <person name="Carpenter L."/>
            <person name="White O."/>
            <person name="Peterson J.D."/>
            <person name="DeBoy R.T."/>
            <person name="Dodson R.J."/>
            <person name="Gwinn M.L."/>
            <person name="Haft D.H."/>
            <person name="Hickey E.K."/>
            <person name="Kolonay J.F."/>
            <person name="Nelson W.C."/>
            <person name="Umayam L.A."/>
            <person name="Ermolaeva M.D."/>
            <person name="Salzberg S.L."/>
            <person name="Delcher A."/>
            <person name="Utterback T.R."/>
            <person name="Weidman J.F."/>
            <person name="Khouri H.M."/>
            <person name="Gill J."/>
            <person name="Mikula A."/>
            <person name="Bishai W."/>
            <person name="Jacobs W.R. Jr."/>
            <person name="Venter J.C."/>
            <person name="Fraser C.M."/>
        </authorList>
    </citation>
    <scope>NUCLEOTIDE SEQUENCE [LARGE SCALE GENOMIC DNA]</scope>
    <source>
        <strain>CDC 1551 / Oshkosh</strain>
    </source>
</reference>
<reference key="2">
    <citation type="journal article" date="2006" name="Antimicrob. Agents Chemother.">
        <title>Differential gene expression in response to exposure to antimycobacterial agents and other stress conditions among seven Mycobacterium tuberculosis whiB-like genes.</title>
        <authorList>
            <person name="Geiman D.E."/>
            <person name="Raghunand T.R."/>
            <person name="Agarwal N."/>
            <person name="Bishai W.R."/>
        </authorList>
    </citation>
    <scope>INDUCTION</scope>
    <source>
        <strain>CDC 1551 / Oshkosh</strain>
    </source>
</reference>
<reference key="3">
    <citation type="journal article" date="2012" name="PLoS ONE">
        <title>Gene expression of Mycobacterium tuberculosis putative transcription factors whiB1-7 in redox environments.</title>
        <authorList>
            <person name="Larsson C."/>
            <person name="Luna B."/>
            <person name="Ammerman N.C."/>
            <person name="Maiga M."/>
            <person name="Agarwal N."/>
            <person name="Bishai W.R."/>
        </authorList>
    </citation>
    <scope>INDUCTION</scope>
    <source>
        <strain>CDC 1551 / Oshkosh</strain>
    </source>
</reference>
<dbReference type="EMBL" id="AE000516">
    <property type="protein sequence ID" value="AAK48150.1"/>
    <property type="molecule type" value="Genomic_DNA"/>
</dbReference>
<dbReference type="PIR" id="B70791">
    <property type="entry name" value="B70791"/>
</dbReference>
<dbReference type="RefSeq" id="WP_003419743.1">
    <property type="nucleotide sequence ID" value="NZ_KK341227.1"/>
</dbReference>
<dbReference type="SMR" id="P9WF38"/>
<dbReference type="GeneID" id="45427677"/>
<dbReference type="KEGG" id="mtc:MT3783"/>
<dbReference type="PATRIC" id="fig|83331.31.peg.4074"/>
<dbReference type="HOGENOM" id="CLU_106245_2_3_11"/>
<dbReference type="Proteomes" id="UP000001020">
    <property type="component" value="Chromosome"/>
</dbReference>
<dbReference type="GO" id="GO:0005737">
    <property type="term" value="C:cytoplasm"/>
    <property type="evidence" value="ECO:0007669"/>
    <property type="project" value="UniProtKB-SubCell"/>
</dbReference>
<dbReference type="GO" id="GO:0051539">
    <property type="term" value="F:4 iron, 4 sulfur cluster binding"/>
    <property type="evidence" value="ECO:0007669"/>
    <property type="project" value="UniProtKB-UniRule"/>
</dbReference>
<dbReference type="GO" id="GO:0035731">
    <property type="term" value="F:dinitrosyl-iron complex binding"/>
    <property type="evidence" value="ECO:0007669"/>
    <property type="project" value="UniProtKB-UniRule"/>
</dbReference>
<dbReference type="GO" id="GO:0003677">
    <property type="term" value="F:DNA binding"/>
    <property type="evidence" value="ECO:0007669"/>
    <property type="project" value="UniProtKB-UniRule"/>
</dbReference>
<dbReference type="GO" id="GO:0046872">
    <property type="term" value="F:metal ion binding"/>
    <property type="evidence" value="ECO:0007669"/>
    <property type="project" value="UniProtKB-KW"/>
</dbReference>
<dbReference type="GO" id="GO:0047134">
    <property type="term" value="F:protein-disulfide reductase [NAD(P)H] activity"/>
    <property type="evidence" value="ECO:0007669"/>
    <property type="project" value="TreeGrafter"/>
</dbReference>
<dbReference type="GO" id="GO:0045454">
    <property type="term" value="P:cell redox homeostasis"/>
    <property type="evidence" value="ECO:0007669"/>
    <property type="project" value="TreeGrafter"/>
</dbReference>
<dbReference type="GO" id="GO:0045892">
    <property type="term" value="P:negative regulation of DNA-templated transcription"/>
    <property type="evidence" value="ECO:0007669"/>
    <property type="project" value="TreeGrafter"/>
</dbReference>
<dbReference type="HAMAP" id="MF_01479">
    <property type="entry name" value="WhiB"/>
    <property type="match status" value="1"/>
</dbReference>
<dbReference type="InterPro" id="IPR034768">
    <property type="entry name" value="4FE4S_WBL"/>
</dbReference>
<dbReference type="InterPro" id="IPR003482">
    <property type="entry name" value="Whib"/>
</dbReference>
<dbReference type="PANTHER" id="PTHR38839:SF7">
    <property type="entry name" value="TRANSCRIPTIONAL REGULATOR WHIB4"/>
    <property type="match status" value="1"/>
</dbReference>
<dbReference type="PANTHER" id="PTHR38839">
    <property type="entry name" value="TRANSCRIPTIONAL REGULATOR WHID-RELATED"/>
    <property type="match status" value="1"/>
</dbReference>
<dbReference type="Pfam" id="PF02467">
    <property type="entry name" value="Whib"/>
    <property type="match status" value="1"/>
</dbReference>
<dbReference type="PROSITE" id="PS51674">
    <property type="entry name" value="4FE4S_WBL"/>
    <property type="match status" value="1"/>
</dbReference>
<proteinExistence type="evidence at transcript level"/>
<feature type="chain" id="PRO_0000428606" description="Transcriptional regulator WhiB4">
    <location>
        <begin position="1"/>
        <end position="118"/>
    </location>
</feature>
<feature type="domain" description="4Fe-4S Wbl-type">
    <location>
        <begin position="36"/>
        <end position="92"/>
    </location>
</feature>
<feature type="binding site" evidence="1">
    <location>
        <position position="37"/>
    </location>
    <ligand>
        <name>[4Fe-4S] cluster</name>
        <dbReference type="ChEBI" id="CHEBI:49883"/>
    </ligand>
</feature>
<feature type="binding site" evidence="1">
    <location>
        <position position="59"/>
    </location>
    <ligand>
        <name>[4Fe-4S] cluster</name>
        <dbReference type="ChEBI" id="CHEBI:49883"/>
    </ligand>
</feature>
<feature type="binding site" evidence="1">
    <location>
        <position position="62"/>
    </location>
    <ligand>
        <name>[4Fe-4S] cluster</name>
        <dbReference type="ChEBI" id="CHEBI:49883"/>
    </ligand>
</feature>
<feature type="binding site" evidence="1">
    <location>
        <position position="68"/>
    </location>
    <ligand>
        <name>[4Fe-4S] cluster</name>
        <dbReference type="ChEBI" id="CHEBI:49883"/>
    </ligand>
</feature>
<feature type="disulfide bond" description="Upon loss of 4Fe-S clusters" evidence="1">
    <location>
        <begin position="37"/>
        <end position="68"/>
    </location>
</feature>
<feature type="disulfide bond" description="Upon loss of 4Fe-S clusters" evidence="1">
    <location>
        <begin position="59"/>
        <end position="62"/>
    </location>
</feature>
<gene>
    <name type="primary">whiB4</name>
    <name type="ordered locus">MT3783</name>
</gene>
<sequence length="118" mass="13211">MSGTRPAARRTNLTAAQNVVRSVDAEERIAWVSKALCRTTDPDELFVRGAAQRKAAVICRHCPVMQECAADALDNKVEFGVWGGMTERQRRALLKQHPEVVSWSDYLEKRKRRTGTAG</sequence>
<protein>
    <recommendedName>
        <fullName>Transcriptional regulator WhiB4</fullName>
    </recommendedName>
</protein>
<comment type="function">
    <text evidence="1">Acts as a transcriptional regulator. Probably redox-responsive. The apo- but not holo-form probably binds DNA (By similarity).</text>
</comment>
<comment type="cofactor">
    <cofactor evidence="1">
        <name>[4Fe-4S] cluster</name>
        <dbReference type="ChEBI" id="CHEBI:49883"/>
    </cofactor>
    <text evidence="1">Binds 1 [4Fe-4S] cluster per subunit. Following nitrosylation of the [4Fe-4S] cluster binds 1 [4Fe-8(NO)] cluster per subunit.</text>
</comment>
<comment type="subcellular location">
    <subcellularLocation>
        <location evidence="1">Cytoplasm</location>
    </subcellularLocation>
</comment>
<comment type="induction">
    <text evidence="2 3">Essentially constitutive over all growth phases. 2-fold repressed by ethanol, 4-fold by SDS. Not induced by hypoxia, slightly induced by NO, cAMP, 8-fold induced in mouse lung infection.</text>
</comment>
<comment type="PTM">
    <text evidence="1">The Fe-S cluster can be nitrosylated by nitric oxide (NO).</text>
</comment>
<comment type="PTM">
    <text evidence="1">Upon Fe-S cluster removal intramolecular disulfide bonds are formed.</text>
</comment>
<comment type="similarity">
    <text evidence="4">Belongs to the WhiB family.</text>
</comment>
<evidence type="ECO:0000250" key="1"/>
<evidence type="ECO:0000269" key="2">
    <source>
    </source>
</evidence>
<evidence type="ECO:0000269" key="3">
    <source>
    </source>
</evidence>
<evidence type="ECO:0000305" key="4"/>
<organism>
    <name type="scientific">Mycobacterium tuberculosis (strain CDC 1551 / Oshkosh)</name>
    <dbReference type="NCBI Taxonomy" id="83331"/>
    <lineage>
        <taxon>Bacteria</taxon>
        <taxon>Bacillati</taxon>
        <taxon>Actinomycetota</taxon>
        <taxon>Actinomycetes</taxon>
        <taxon>Mycobacteriales</taxon>
        <taxon>Mycobacteriaceae</taxon>
        <taxon>Mycobacterium</taxon>
        <taxon>Mycobacterium tuberculosis complex</taxon>
    </lineage>
</organism>
<keyword id="KW-0004">4Fe-4S</keyword>
<keyword id="KW-0963">Cytoplasm</keyword>
<keyword id="KW-1015">Disulfide bond</keyword>
<keyword id="KW-0238">DNA-binding</keyword>
<keyword id="KW-0408">Iron</keyword>
<keyword id="KW-0411">Iron-sulfur</keyword>
<keyword id="KW-0479">Metal-binding</keyword>
<keyword id="KW-1185">Reference proteome</keyword>
<keyword id="KW-0804">Transcription</keyword>
<keyword id="KW-0805">Transcription regulation</keyword>
<accession>P9WF38</accession>
<accession>F2GFC4</accession>
<accession>L0TGF3</accession>
<accession>O69649</accession>
<accession>Q7D530</accession>
<name>WHIB4_MYCTO</name>